<keyword id="KW-0119">Carbohydrate metabolism</keyword>
<keyword id="KW-0413">Isomerase</keyword>
<keyword id="KW-1185">Reference proteome</keyword>
<feature type="chain" id="PRO_0000179807" description="Putative N-acetylmannosamine-6-phosphate 2-epimerase 1">
    <location>
        <begin position="1"/>
        <end position="232"/>
    </location>
</feature>
<accession>Q8DPF0</accession>
<comment type="function">
    <text evidence="1">Converts N-acetylmannosamine-6-phosphate (ManNAc-6-P) to N-acetylglucosamine-6-phosphate (GlcNAc-6-P).</text>
</comment>
<comment type="catalytic activity">
    <reaction>
        <text>an N-acyl-D-glucosamine 6-phosphate = an N-acyl-D-mannosamine 6-phosphate</text>
        <dbReference type="Rhea" id="RHEA:23932"/>
        <dbReference type="ChEBI" id="CHEBI:57599"/>
        <dbReference type="ChEBI" id="CHEBI:57666"/>
        <dbReference type="EC" id="5.1.3.9"/>
    </reaction>
</comment>
<comment type="pathway">
    <text>Amino-sugar metabolism; N-acetylneuraminate degradation; D-fructose 6-phosphate from N-acetylneuraminate: step 3/5.</text>
</comment>
<comment type="similarity">
    <text evidence="1">Belongs to the NanE family.</text>
</comment>
<protein>
    <recommendedName>
        <fullName>Putative N-acetylmannosamine-6-phosphate 2-epimerase 1</fullName>
        <ecNumber>5.1.3.9</ecNumber>
    </recommendedName>
    <alternativeName>
        <fullName>ManNAc-6-P epimerase 1</fullName>
    </alternativeName>
</protein>
<proteinExistence type="inferred from homology"/>
<sequence>MSQISKEALIEQIKDGIIVSCQALPHEPLYTEAGGVIPLLVKAAEQGGAVGIRANSVRDIKEIKEVTKLPIIGIIKRDYPPQEPFITATMKEVDELAELDIEVIALDCTKRERYDGLEIQEFIRQVKEKYPNQLLMADTSIFEEGLAAVEAGIDFVGTTLSGYTSYSPKVDGPDFELIKKLCDAGVDVIAEGKIYTPEQAKQILEYGVRGIVVGGAITRPKEITERFVAGLK</sequence>
<gene>
    <name type="primary">nanE1</name>
    <name type="ordered locus">spr1196</name>
</gene>
<reference key="1">
    <citation type="journal article" date="2001" name="J. Bacteriol.">
        <title>Genome of the bacterium Streptococcus pneumoniae strain R6.</title>
        <authorList>
            <person name="Hoskins J."/>
            <person name="Alborn W.E. Jr."/>
            <person name="Arnold J."/>
            <person name="Blaszczak L.C."/>
            <person name="Burgett S."/>
            <person name="DeHoff B.S."/>
            <person name="Estrem S.T."/>
            <person name="Fritz L."/>
            <person name="Fu D.-J."/>
            <person name="Fuller W."/>
            <person name="Geringer C."/>
            <person name="Gilmour R."/>
            <person name="Glass J.S."/>
            <person name="Khoja H."/>
            <person name="Kraft A.R."/>
            <person name="Lagace R.E."/>
            <person name="LeBlanc D.J."/>
            <person name="Lee L.N."/>
            <person name="Lefkowitz E.J."/>
            <person name="Lu J."/>
            <person name="Matsushima P."/>
            <person name="McAhren S.M."/>
            <person name="McHenney M."/>
            <person name="McLeaster K."/>
            <person name="Mundy C.W."/>
            <person name="Nicas T.I."/>
            <person name="Norris F.H."/>
            <person name="O'Gara M."/>
            <person name="Peery R.B."/>
            <person name="Robertson G.T."/>
            <person name="Rockey P."/>
            <person name="Sun P.-M."/>
            <person name="Winkler M.E."/>
            <person name="Yang Y."/>
            <person name="Young-Bellido M."/>
            <person name="Zhao G."/>
            <person name="Zook C.A."/>
            <person name="Baltz R.H."/>
            <person name="Jaskunas S.R."/>
            <person name="Rosteck P.R. Jr."/>
            <person name="Skatrud P.L."/>
            <person name="Glass J.I."/>
        </authorList>
    </citation>
    <scope>NUCLEOTIDE SEQUENCE [LARGE SCALE GENOMIC DNA]</scope>
    <source>
        <strain>ATCC BAA-255 / R6</strain>
    </source>
</reference>
<evidence type="ECO:0000305" key="1"/>
<organism>
    <name type="scientific">Streptococcus pneumoniae (strain ATCC BAA-255 / R6)</name>
    <dbReference type="NCBI Taxonomy" id="171101"/>
    <lineage>
        <taxon>Bacteria</taxon>
        <taxon>Bacillati</taxon>
        <taxon>Bacillota</taxon>
        <taxon>Bacilli</taxon>
        <taxon>Lactobacillales</taxon>
        <taxon>Streptococcaceae</taxon>
        <taxon>Streptococcus</taxon>
    </lineage>
</organism>
<name>NANE1_STRR6</name>
<dbReference type="EC" id="5.1.3.9"/>
<dbReference type="EMBL" id="AE007317">
    <property type="protein sequence ID" value="AAK99999.1"/>
    <property type="molecule type" value="Genomic_DNA"/>
</dbReference>
<dbReference type="PIR" id="C98021">
    <property type="entry name" value="C98021"/>
</dbReference>
<dbReference type="RefSeq" id="NP_358789.1">
    <property type="nucleotide sequence ID" value="NC_003098.1"/>
</dbReference>
<dbReference type="RefSeq" id="WP_000078389.1">
    <property type="nucleotide sequence ID" value="NC_003098.1"/>
</dbReference>
<dbReference type="SMR" id="Q8DPF0"/>
<dbReference type="STRING" id="171101.spr1196"/>
<dbReference type="KEGG" id="spr:spr1196"/>
<dbReference type="PATRIC" id="fig|171101.6.peg.1294"/>
<dbReference type="eggNOG" id="COG3010">
    <property type="taxonomic scope" value="Bacteria"/>
</dbReference>
<dbReference type="HOGENOM" id="CLU_086300_1_0_9"/>
<dbReference type="UniPathway" id="UPA00629">
    <property type="reaction ID" value="UER00682"/>
</dbReference>
<dbReference type="Proteomes" id="UP000000586">
    <property type="component" value="Chromosome"/>
</dbReference>
<dbReference type="GO" id="GO:0005829">
    <property type="term" value="C:cytosol"/>
    <property type="evidence" value="ECO:0000318"/>
    <property type="project" value="GO_Central"/>
</dbReference>
<dbReference type="GO" id="GO:0047465">
    <property type="term" value="F:N-acylglucosamine-6-phosphate 2-epimerase activity"/>
    <property type="evidence" value="ECO:0007669"/>
    <property type="project" value="UniProtKB-EC"/>
</dbReference>
<dbReference type="GO" id="GO:0005975">
    <property type="term" value="P:carbohydrate metabolic process"/>
    <property type="evidence" value="ECO:0007669"/>
    <property type="project" value="UniProtKB-UniRule"/>
</dbReference>
<dbReference type="GO" id="GO:0006053">
    <property type="term" value="P:N-acetylmannosamine catabolic process"/>
    <property type="evidence" value="ECO:0000318"/>
    <property type="project" value="GO_Central"/>
</dbReference>
<dbReference type="GO" id="GO:0019262">
    <property type="term" value="P:N-acetylneuraminate catabolic process"/>
    <property type="evidence" value="ECO:0000318"/>
    <property type="project" value="GO_Central"/>
</dbReference>
<dbReference type="CDD" id="cd04729">
    <property type="entry name" value="NanE"/>
    <property type="match status" value="1"/>
</dbReference>
<dbReference type="FunFam" id="3.20.20.70:FF:000035">
    <property type="entry name" value="Putative N-acetylmannosamine-6-phosphate 2-epimerase"/>
    <property type="match status" value="1"/>
</dbReference>
<dbReference type="Gene3D" id="3.20.20.70">
    <property type="entry name" value="Aldolase class I"/>
    <property type="match status" value="1"/>
</dbReference>
<dbReference type="HAMAP" id="MF_01235">
    <property type="entry name" value="ManNAc6P_epimer"/>
    <property type="match status" value="1"/>
</dbReference>
<dbReference type="InterPro" id="IPR013785">
    <property type="entry name" value="Aldolase_TIM"/>
</dbReference>
<dbReference type="InterPro" id="IPR007260">
    <property type="entry name" value="NanE"/>
</dbReference>
<dbReference type="InterPro" id="IPR011060">
    <property type="entry name" value="RibuloseP-bd_barrel"/>
</dbReference>
<dbReference type="NCBIfam" id="NF002231">
    <property type="entry name" value="PRK01130.1"/>
    <property type="match status" value="1"/>
</dbReference>
<dbReference type="PANTHER" id="PTHR36204">
    <property type="entry name" value="N-ACETYLMANNOSAMINE-6-PHOSPHATE 2-EPIMERASE-RELATED"/>
    <property type="match status" value="1"/>
</dbReference>
<dbReference type="PANTHER" id="PTHR36204:SF1">
    <property type="entry name" value="N-ACETYLMANNOSAMINE-6-PHOSPHATE 2-EPIMERASE-RELATED"/>
    <property type="match status" value="1"/>
</dbReference>
<dbReference type="Pfam" id="PF04131">
    <property type="entry name" value="NanE"/>
    <property type="match status" value="1"/>
</dbReference>
<dbReference type="SUPFAM" id="SSF51366">
    <property type="entry name" value="Ribulose-phoshate binding barrel"/>
    <property type="match status" value="1"/>
</dbReference>